<evidence type="ECO:0000250" key="1"/>
<evidence type="ECO:0000255" key="2">
    <source>
        <dbReference type="HAMAP-Rule" id="MF_00100"/>
    </source>
</evidence>
<evidence type="ECO:0000256" key="3">
    <source>
        <dbReference type="SAM" id="MobiDB-lite"/>
    </source>
</evidence>
<reference key="1">
    <citation type="journal article" date="2003" name="Nat. Biotechnol.">
        <title>The genome sequence of the entomopathogenic bacterium Photorhabdus luminescens.</title>
        <authorList>
            <person name="Duchaud E."/>
            <person name="Rusniok C."/>
            <person name="Frangeul L."/>
            <person name="Buchrieser C."/>
            <person name="Givaudan A."/>
            <person name="Taourit S."/>
            <person name="Bocs S."/>
            <person name="Boursaux-Eude C."/>
            <person name="Chandler M."/>
            <person name="Charles J.-F."/>
            <person name="Dassa E."/>
            <person name="Derose R."/>
            <person name="Derzelle S."/>
            <person name="Freyssinet G."/>
            <person name="Gaudriault S."/>
            <person name="Medigue C."/>
            <person name="Lanois A."/>
            <person name="Powell K."/>
            <person name="Siguier P."/>
            <person name="Vincent R."/>
            <person name="Wingate V."/>
            <person name="Zouine M."/>
            <person name="Glaser P."/>
            <person name="Boemare N."/>
            <person name="Danchin A."/>
            <person name="Kunst F."/>
        </authorList>
    </citation>
    <scope>NUCLEOTIDE SEQUENCE [LARGE SCALE GENOMIC DNA]</scope>
    <source>
        <strain>DSM 15139 / CIP 105565 / TT01</strain>
    </source>
</reference>
<keyword id="KW-0963">Cytoplasm</keyword>
<keyword id="KW-0342">GTP-binding</keyword>
<keyword id="KW-0396">Initiation factor</keyword>
<keyword id="KW-0547">Nucleotide-binding</keyword>
<keyword id="KW-0648">Protein biosynthesis</keyword>
<keyword id="KW-1185">Reference proteome</keyword>
<gene>
    <name evidence="2" type="primary">infB</name>
    <name type="ordered locus">plu4529</name>
</gene>
<organism>
    <name type="scientific">Photorhabdus laumondii subsp. laumondii (strain DSM 15139 / CIP 105565 / TT01)</name>
    <name type="common">Photorhabdus luminescens subsp. laumondii</name>
    <dbReference type="NCBI Taxonomy" id="243265"/>
    <lineage>
        <taxon>Bacteria</taxon>
        <taxon>Pseudomonadati</taxon>
        <taxon>Pseudomonadota</taxon>
        <taxon>Gammaproteobacteria</taxon>
        <taxon>Enterobacterales</taxon>
        <taxon>Morganellaceae</taxon>
        <taxon>Photorhabdus</taxon>
    </lineage>
</organism>
<feature type="chain" id="PRO_0000137231" description="Translation initiation factor IF-2">
    <location>
        <begin position="1"/>
        <end position="909"/>
    </location>
</feature>
<feature type="domain" description="tr-type G">
    <location>
        <begin position="408"/>
        <end position="577"/>
    </location>
</feature>
<feature type="region of interest" description="Disordered" evidence="3">
    <location>
        <begin position="49"/>
        <end position="314"/>
    </location>
</feature>
<feature type="region of interest" description="G1" evidence="1">
    <location>
        <begin position="417"/>
        <end position="424"/>
    </location>
</feature>
<feature type="region of interest" description="G2" evidence="1">
    <location>
        <begin position="442"/>
        <end position="446"/>
    </location>
</feature>
<feature type="region of interest" description="G3" evidence="1">
    <location>
        <begin position="463"/>
        <end position="466"/>
    </location>
</feature>
<feature type="region of interest" description="G4" evidence="1">
    <location>
        <begin position="517"/>
        <end position="520"/>
    </location>
</feature>
<feature type="region of interest" description="G5" evidence="1">
    <location>
        <begin position="553"/>
        <end position="555"/>
    </location>
</feature>
<feature type="compositionally biased region" description="Basic and acidic residues" evidence="3">
    <location>
        <begin position="99"/>
        <end position="177"/>
    </location>
</feature>
<feature type="compositionally biased region" description="Basic and acidic residues" evidence="3">
    <location>
        <begin position="186"/>
        <end position="236"/>
    </location>
</feature>
<feature type="compositionally biased region" description="Basic and acidic residues" evidence="3">
    <location>
        <begin position="255"/>
        <end position="270"/>
    </location>
</feature>
<feature type="compositionally biased region" description="Basic residues" evidence="3">
    <location>
        <begin position="271"/>
        <end position="285"/>
    </location>
</feature>
<feature type="compositionally biased region" description="Basic and acidic residues" evidence="3">
    <location>
        <begin position="286"/>
        <end position="299"/>
    </location>
</feature>
<feature type="binding site" evidence="2">
    <location>
        <begin position="417"/>
        <end position="424"/>
    </location>
    <ligand>
        <name>GTP</name>
        <dbReference type="ChEBI" id="CHEBI:37565"/>
    </ligand>
</feature>
<feature type="binding site" evidence="2">
    <location>
        <begin position="463"/>
        <end position="467"/>
    </location>
    <ligand>
        <name>GTP</name>
        <dbReference type="ChEBI" id="CHEBI:37565"/>
    </ligand>
</feature>
<feature type="binding site" evidence="2">
    <location>
        <begin position="517"/>
        <end position="520"/>
    </location>
    <ligand>
        <name>GTP</name>
        <dbReference type="ChEBI" id="CHEBI:37565"/>
    </ligand>
</feature>
<name>IF2_PHOLL</name>
<accession>Q7MYY7</accession>
<comment type="function">
    <text evidence="2">One of the essential components for the initiation of protein synthesis. Protects formylmethionyl-tRNA from spontaneous hydrolysis and promotes its binding to the 30S ribosomal subunits. Also involved in the hydrolysis of GTP during the formation of the 70S ribosomal complex.</text>
</comment>
<comment type="subcellular location">
    <subcellularLocation>
        <location evidence="2">Cytoplasm</location>
    </subcellularLocation>
</comment>
<comment type="similarity">
    <text evidence="2">Belongs to the TRAFAC class translation factor GTPase superfamily. Classic translation factor GTPase family. IF-2 subfamily.</text>
</comment>
<proteinExistence type="inferred from homology"/>
<protein>
    <recommendedName>
        <fullName evidence="2">Translation initiation factor IF-2</fullName>
    </recommendedName>
</protein>
<sequence>MTDVTVKSLAEEIQTSVDRLVQQFADAGIKKTETDFVSQKEKEALLAHLNREQGGSAGKPDKLTLQRKTRSTLNVSGTDGKSKPVAVEVRKKRTYVNRDAVEQAKAEEQAKREAEEQARREAEEKAQREAEAAAKKLVEEQAKREAEEKAKREAAEKAKRQAAESEKVTNQHTEHKQKPAQTDKTIQSEKARREAEAADLKRKAEEEMRRKVEEEAKRVAEEARRMAEENQDKWSSDSDSIDSDDYHVTTSRHARAAEDENDAKVEGDRRARGRSGKATRQKKNNKHSESKADREEARAVGRTKGKQRKTSTLQQSFNKPVAAVNRDVVIGETITVAELANKMAVKGSQVIKAMMKMGAMATINQVIDQETAQLVAEEMGHKVILRRENELEEALMSDRDTGEAVAEPRAPVVTIMGHVDHGKTSLLDYIRSTKVASGEAGGITQHIGAYHVETDSGMITFLDTPGHAAFTSMRARGAKATDIVVLVVAADDGVMPQTIEAIQHAKAASVPVVVAVNKIDKPEADPDRVKSELSQHGVQPEEWGGETQFINVSAKAGIGIDELLDAILLQAEVLELKAVRSGMASGVVIESFLDKGRGPVATVLVQEGTLNKGDIVLCGFEYGRVRAMRDELGREVFSAGPSIPVEILGLSNVPAAGDEATVVRDEKKAREVALYRQGKFREVKLARQQKSKLENMFANMEEGEVSELNIVLKSDVQGSCEAIREALEQLSTDEVKVKIIGSGVGGITETDATLAAASNAIILGFNVRADASARRVVENESLDLRYYSVIYSLIDEVKQAMSGMLAPEYKQQIMGLAEVRDVFKSPKFGAIAGCMVTEGTIKRNNPIRVLRDNVVIYEGELESLRRFKDDVNEVRNGMECGIGVKNYNDVRVGDMIEVFEIIEVKRSIA</sequence>
<dbReference type="EMBL" id="BX571874">
    <property type="protein sequence ID" value="CAE16901.1"/>
    <property type="molecule type" value="Genomic_DNA"/>
</dbReference>
<dbReference type="RefSeq" id="WP_011148605.1">
    <property type="nucleotide sequence ID" value="NC_005126.1"/>
</dbReference>
<dbReference type="SMR" id="Q7MYY7"/>
<dbReference type="STRING" id="243265.plu4529"/>
<dbReference type="GeneID" id="48850738"/>
<dbReference type="KEGG" id="plu:plu4529"/>
<dbReference type="eggNOG" id="COG0532">
    <property type="taxonomic scope" value="Bacteria"/>
</dbReference>
<dbReference type="HOGENOM" id="CLU_006301_6_3_6"/>
<dbReference type="OrthoDB" id="9811804at2"/>
<dbReference type="Proteomes" id="UP000002514">
    <property type="component" value="Chromosome"/>
</dbReference>
<dbReference type="GO" id="GO:0005829">
    <property type="term" value="C:cytosol"/>
    <property type="evidence" value="ECO:0007669"/>
    <property type="project" value="TreeGrafter"/>
</dbReference>
<dbReference type="GO" id="GO:0005525">
    <property type="term" value="F:GTP binding"/>
    <property type="evidence" value="ECO:0007669"/>
    <property type="project" value="UniProtKB-KW"/>
</dbReference>
<dbReference type="GO" id="GO:0003924">
    <property type="term" value="F:GTPase activity"/>
    <property type="evidence" value="ECO:0007669"/>
    <property type="project" value="UniProtKB-UniRule"/>
</dbReference>
<dbReference type="GO" id="GO:0097216">
    <property type="term" value="F:guanosine tetraphosphate binding"/>
    <property type="evidence" value="ECO:0007669"/>
    <property type="project" value="UniProtKB-ARBA"/>
</dbReference>
<dbReference type="GO" id="GO:0003743">
    <property type="term" value="F:translation initiation factor activity"/>
    <property type="evidence" value="ECO:0007669"/>
    <property type="project" value="UniProtKB-UniRule"/>
</dbReference>
<dbReference type="CDD" id="cd01887">
    <property type="entry name" value="IF2_eIF5B"/>
    <property type="match status" value="1"/>
</dbReference>
<dbReference type="CDD" id="cd03702">
    <property type="entry name" value="IF2_mtIF2_II"/>
    <property type="match status" value="1"/>
</dbReference>
<dbReference type="CDD" id="cd03692">
    <property type="entry name" value="mtIF2_IVc"/>
    <property type="match status" value="1"/>
</dbReference>
<dbReference type="FunFam" id="2.40.30.10:FF:000007">
    <property type="entry name" value="Translation initiation factor IF-2"/>
    <property type="match status" value="1"/>
</dbReference>
<dbReference type="FunFam" id="2.40.30.10:FF:000008">
    <property type="entry name" value="Translation initiation factor IF-2"/>
    <property type="match status" value="1"/>
</dbReference>
<dbReference type="FunFam" id="3.30.56.50:FF:000001">
    <property type="entry name" value="Translation initiation factor IF-2"/>
    <property type="match status" value="1"/>
</dbReference>
<dbReference type="FunFam" id="3.40.50.10050:FF:000001">
    <property type="entry name" value="Translation initiation factor IF-2"/>
    <property type="match status" value="1"/>
</dbReference>
<dbReference type="FunFam" id="3.40.50.300:FF:000019">
    <property type="entry name" value="Translation initiation factor IF-2"/>
    <property type="match status" value="1"/>
</dbReference>
<dbReference type="Gene3D" id="3.40.50.300">
    <property type="entry name" value="P-loop containing nucleotide triphosphate hydrolases"/>
    <property type="match status" value="1"/>
</dbReference>
<dbReference type="Gene3D" id="3.30.56.50">
    <property type="entry name" value="Putative DNA-binding domain, N-terminal subdomain of bacterial translation initiation factor IF2"/>
    <property type="match status" value="1"/>
</dbReference>
<dbReference type="Gene3D" id="2.40.30.10">
    <property type="entry name" value="Translation factors"/>
    <property type="match status" value="2"/>
</dbReference>
<dbReference type="Gene3D" id="3.40.50.10050">
    <property type="entry name" value="Translation initiation factor IF- 2, domain 3"/>
    <property type="match status" value="1"/>
</dbReference>
<dbReference type="HAMAP" id="MF_00100_B">
    <property type="entry name" value="IF_2_B"/>
    <property type="match status" value="1"/>
</dbReference>
<dbReference type="InterPro" id="IPR009061">
    <property type="entry name" value="DNA-bd_dom_put_sf"/>
</dbReference>
<dbReference type="InterPro" id="IPR053905">
    <property type="entry name" value="EF-G-like_DII"/>
</dbReference>
<dbReference type="InterPro" id="IPR004161">
    <property type="entry name" value="EFTu-like_2"/>
</dbReference>
<dbReference type="InterPro" id="IPR013575">
    <property type="entry name" value="IF2_assoc_dom_bac"/>
</dbReference>
<dbReference type="InterPro" id="IPR044145">
    <property type="entry name" value="IF2_II"/>
</dbReference>
<dbReference type="InterPro" id="IPR006847">
    <property type="entry name" value="IF2_N"/>
</dbReference>
<dbReference type="InterPro" id="IPR027417">
    <property type="entry name" value="P-loop_NTPase"/>
</dbReference>
<dbReference type="InterPro" id="IPR005225">
    <property type="entry name" value="Small_GTP-bd"/>
</dbReference>
<dbReference type="InterPro" id="IPR000795">
    <property type="entry name" value="T_Tr_GTP-bd_dom"/>
</dbReference>
<dbReference type="InterPro" id="IPR000178">
    <property type="entry name" value="TF_IF2_bacterial-like"/>
</dbReference>
<dbReference type="InterPro" id="IPR015760">
    <property type="entry name" value="TIF_IF2"/>
</dbReference>
<dbReference type="InterPro" id="IPR023115">
    <property type="entry name" value="TIF_IF2_dom3"/>
</dbReference>
<dbReference type="InterPro" id="IPR036925">
    <property type="entry name" value="TIF_IF2_dom3_sf"/>
</dbReference>
<dbReference type="InterPro" id="IPR009000">
    <property type="entry name" value="Transl_B-barrel_sf"/>
</dbReference>
<dbReference type="NCBIfam" id="TIGR00487">
    <property type="entry name" value="IF-2"/>
    <property type="match status" value="1"/>
</dbReference>
<dbReference type="NCBIfam" id="TIGR00231">
    <property type="entry name" value="small_GTP"/>
    <property type="match status" value="1"/>
</dbReference>
<dbReference type="PANTHER" id="PTHR43381:SF5">
    <property type="entry name" value="TR-TYPE G DOMAIN-CONTAINING PROTEIN"/>
    <property type="match status" value="1"/>
</dbReference>
<dbReference type="PANTHER" id="PTHR43381">
    <property type="entry name" value="TRANSLATION INITIATION FACTOR IF-2-RELATED"/>
    <property type="match status" value="1"/>
</dbReference>
<dbReference type="Pfam" id="PF22042">
    <property type="entry name" value="EF-G_D2"/>
    <property type="match status" value="1"/>
</dbReference>
<dbReference type="Pfam" id="PF00009">
    <property type="entry name" value="GTP_EFTU"/>
    <property type="match status" value="1"/>
</dbReference>
<dbReference type="Pfam" id="PF03144">
    <property type="entry name" value="GTP_EFTU_D2"/>
    <property type="match status" value="1"/>
</dbReference>
<dbReference type="Pfam" id="PF11987">
    <property type="entry name" value="IF-2"/>
    <property type="match status" value="1"/>
</dbReference>
<dbReference type="Pfam" id="PF08364">
    <property type="entry name" value="IF2_assoc"/>
    <property type="match status" value="1"/>
</dbReference>
<dbReference type="Pfam" id="PF04760">
    <property type="entry name" value="IF2_N"/>
    <property type="match status" value="2"/>
</dbReference>
<dbReference type="SUPFAM" id="SSF52156">
    <property type="entry name" value="Initiation factor IF2/eIF5b, domain 3"/>
    <property type="match status" value="1"/>
</dbReference>
<dbReference type="SUPFAM" id="SSF52540">
    <property type="entry name" value="P-loop containing nucleoside triphosphate hydrolases"/>
    <property type="match status" value="1"/>
</dbReference>
<dbReference type="SUPFAM" id="SSF46955">
    <property type="entry name" value="Putative DNA-binding domain"/>
    <property type="match status" value="1"/>
</dbReference>
<dbReference type="SUPFAM" id="SSF50447">
    <property type="entry name" value="Translation proteins"/>
    <property type="match status" value="2"/>
</dbReference>
<dbReference type="PROSITE" id="PS51722">
    <property type="entry name" value="G_TR_2"/>
    <property type="match status" value="1"/>
</dbReference>
<dbReference type="PROSITE" id="PS01176">
    <property type="entry name" value="IF2"/>
    <property type="match status" value="1"/>
</dbReference>